<dbReference type="EMBL" id="AM420293">
    <property type="protein sequence ID" value="CAM06003.1"/>
    <property type="molecule type" value="Genomic_DNA"/>
</dbReference>
<dbReference type="RefSeq" id="WP_009948622.1">
    <property type="nucleotide sequence ID" value="NC_009142.1"/>
</dbReference>
<dbReference type="SMR" id="A4FPM8"/>
<dbReference type="STRING" id="405948.SACE_6839"/>
<dbReference type="KEGG" id="sen:SACE_6839"/>
<dbReference type="eggNOG" id="COG0480">
    <property type="taxonomic scope" value="Bacteria"/>
</dbReference>
<dbReference type="HOGENOM" id="CLU_002794_4_1_11"/>
<dbReference type="OrthoDB" id="9801472at2"/>
<dbReference type="Proteomes" id="UP000006728">
    <property type="component" value="Chromosome"/>
</dbReference>
<dbReference type="GO" id="GO:0005737">
    <property type="term" value="C:cytoplasm"/>
    <property type="evidence" value="ECO:0007669"/>
    <property type="project" value="UniProtKB-SubCell"/>
</dbReference>
<dbReference type="GO" id="GO:0005525">
    <property type="term" value="F:GTP binding"/>
    <property type="evidence" value="ECO:0007669"/>
    <property type="project" value="UniProtKB-UniRule"/>
</dbReference>
<dbReference type="GO" id="GO:0003924">
    <property type="term" value="F:GTPase activity"/>
    <property type="evidence" value="ECO:0007669"/>
    <property type="project" value="InterPro"/>
</dbReference>
<dbReference type="GO" id="GO:0003746">
    <property type="term" value="F:translation elongation factor activity"/>
    <property type="evidence" value="ECO:0007669"/>
    <property type="project" value="UniProtKB-UniRule"/>
</dbReference>
<dbReference type="GO" id="GO:0032790">
    <property type="term" value="P:ribosome disassembly"/>
    <property type="evidence" value="ECO:0007669"/>
    <property type="project" value="TreeGrafter"/>
</dbReference>
<dbReference type="CDD" id="cd01886">
    <property type="entry name" value="EF-G"/>
    <property type="match status" value="1"/>
</dbReference>
<dbReference type="CDD" id="cd16262">
    <property type="entry name" value="EFG_III"/>
    <property type="match status" value="1"/>
</dbReference>
<dbReference type="CDD" id="cd01434">
    <property type="entry name" value="EFG_mtEFG1_IV"/>
    <property type="match status" value="1"/>
</dbReference>
<dbReference type="CDD" id="cd03713">
    <property type="entry name" value="EFG_mtEFG_C"/>
    <property type="match status" value="1"/>
</dbReference>
<dbReference type="CDD" id="cd04088">
    <property type="entry name" value="EFG_mtEFG_II"/>
    <property type="match status" value="1"/>
</dbReference>
<dbReference type="FunFam" id="2.40.30.10:FF:000006">
    <property type="entry name" value="Elongation factor G"/>
    <property type="match status" value="1"/>
</dbReference>
<dbReference type="FunFam" id="3.30.230.10:FF:000003">
    <property type="entry name" value="Elongation factor G"/>
    <property type="match status" value="1"/>
</dbReference>
<dbReference type="FunFam" id="3.30.70.240:FF:000001">
    <property type="entry name" value="Elongation factor G"/>
    <property type="match status" value="1"/>
</dbReference>
<dbReference type="FunFam" id="3.30.70.870:FF:000001">
    <property type="entry name" value="Elongation factor G"/>
    <property type="match status" value="1"/>
</dbReference>
<dbReference type="FunFam" id="3.40.50.300:FF:000029">
    <property type="entry name" value="Elongation factor G"/>
    <property type="match status" value="1"/>
</dbReference>
<dbReference type="Gene3D" id="3.30.230.10">
    <property type="match status" value="1"/>
</dbReference>
<dbReference type="Gene3D" id="3.30.70.240">
    <property type="match status" value="1"/>
</dbReference>
<dbReference type="Gene3D" id="3.30.70.870">
    <property type="entry name" value="Elongation Factor G (Translational Gtpase), domain 3"/>
    <property type="match status" value="1"/>
</dbReference>
<dbReference type="Gene3D" id="3.40.50.300">
    <property type="entry name" value="P-loop containing nucleotide triphosphate hydrolases"/>
    <property type="match status" value="1"/>
</dbReference>
<dbReference type="Gene3D" id="2.40.30.10">
    <property type="entry name" value="Translation factors"/>
    <property type="match status" value="1"/>
</dbReference>
<dbReference type="HAMAP" id="MF_00054_B">
    <property type="entry name" value="EF_G_EF_2_B"/>
    <property type="match status" value="1"/>
</dbReference>
<dbReference type="InterPro" id="IPR041095">
    <property type="entry name" value="EFG_II"/>
</dbReference>
<dbReference type="InterPro" id="IPR009022">
    <property type="entry name" value="EFG_III"/>
</dbReference>
<dbReference type="InterPro" id="IPR035647">
    <property type="entry name" value="EFG_III/V"/>
</dbReference>
<dbReference type="InterPro" id="IPR047872">
    <property type="entry name" value="EFG_IV"/>
</dbReference>
<dbReference type="InterPro" id="IPR035649">
    <property type="entry name" value="EFG_V"/>
</dbReference>
<dbReference type="InterPro" id="IPR000640">
    <property type="entry name" value="EFG_V-like"/>
</dbReference>
<dbReference type="InterPro" id="IPR004161">
    <property type="entry name" value="EFTu-like_2"/>
</dbReference>
<dbReference type="InterPro" id="IPR031157">
    <property type="entry name" value="G_TR_CS"/>
</dbReference>
<dbReference type="InterPro" id="IPR027417">
    <property type="entry name" value="P-loop_NTPase"/>
</dbReference>
<dbReference type="InterPro" id="IPR020568">
    <property type="entry name" value="Ribosomal_Su5_D2-typ_SF"/>
</dbReference>
<dbReference type="InterPro" id="IPR014721">
    <property type="entry name" value="Ribsml_uS5_D2-typ_fold_subgr"/>
</dbReference>
<dbReference type="InterPro" id="IPR005225">
    <property type="entry name" value="Small_GTP-bd"/>
</dbReference>
<dbReference type="InterPro" id="IPR000795">
    <property type="entry name" value="T_Tr_GTP-bd_dom"/>
</dbReference>
<dbReference type="InterPro" id="IPR009000">
    <property type="entry name" value="Transl_B-barrel_sf"/>
</dbReference>
<dbReference type="InterPro" id="IPR004540">
    <property type="entry name" value="Transl_elong_EFG/EF2"/>
</dbReference>
<dbReference type="InterPro" id="IPR005517">
    <property type="entry name" value="Transl_elong_EFG/EF2_IV"/>
</dbReference>
<dbReference type="NCBIfam" id="TIGR00484">
    <property type="entry name" value="EF-G"/>
    <property type="match status" value="1"/>
</dbReference>
<dbReference type="NCBIfam" id="NF009379">
    <property type="entry name" value="PRK12740.1-3"/>
    <property type="match status" value="1"/>
</dbReference>
<dbReference type="NCBIfam" id="NF009381">
    <property type="entry name" value="PRK12740.1-5"/>
    <property type="match status" value="1"/>
</dbReference>
<dbReference type="NCBIfam" id="TIGR00231">
    <property type="entry name" value="small_GTP"/>
    <property type="match status" value="1"/>
</dbReference>
<dbReference type="PANTHER" id="PTHR43261:SF1">
    <property type="entry name" value="RIBOSOME-RELEASING FACTOR 2, MITOCHONDRIAL"/>
    <property type="match status" value="1"/>
</dbReference>
<dbReference type="PANTHER" id="PTHR43261">
    <property type="entry name" value="TRANSLATION ELONGATION FACTOR G-RELATED"/>
    <property type="match status" value="1"/>
</dbReference>
<dbReference type="Pfam" id="PF00679">
    <property type="entry name" value="EFG_C"/>
    <property type="match status" value="1"/>
</dbReference>
<dbReference type="Pfam" id="PF14492">
    <property type="entry name" value="EFG_III"/>
    <property type="match status" value="1"/>
</dbReference>
<dbReference type="Pfam" id="PF03764">
    <property type="entry name" value="EFG_IV"/>
    <property type="match status" value="1"/>
</dbReference>
<dbReference type="Pfam" id="PF00009">
    <property type="entry name" value="GTP_EFTU"/>
    <property type="match status" value="1"/>
</dbReference>
<dbReference type="Pfam" id="PF03144">
    <property type="entry name" value="GTP_EFTU_D2"/>
    <property type="match status" value="1"/>
</dbReference>
<dbReference type="PRINTS" id="PR00315">
    <property type="entry name" value="ELONGATNFCT"/>
</dbReference>
<dbReference type="SMART" id="SM00838">
    <property type="entry name" value="EFG_C"/>
    <property type="match status" value="1"/>
</dbReference>
<dbReference type="SMART" id="SM00889">
    <property type="entry name" value="EFG_IV"/>
    <property type="match status" value="1"/>
</dbReference>
<dbReference type="SUPFAM" id="SSF54980">
    <property type="entry name" value="EF-G C-terminal domain-like"/>
    <property type="match status" value="2"/>
</dbReference>
<dbReference type="SUPFAM" id="SSF52540">
    <property type="entry name" value="P-loop containing nucleoside triphosphate hydrolases"/>
    <property type="match status" value="1"/>
</dbReference>
<dbReference type="SUPFAM" id="SSF54211">
    <property type="entry name" value="Ribosomal protein S5 domain 2-like"/>
    <property type="match status" value="1"/>
</dbReference>
<dbReference type="SUPFAM" id="SSF50447">
    <property type="entry name" value="Translation proteins"/>
    <property type="match status" value="1"/>
</dbReference>
<dbReference type="PROSITE" id="PS00301">
    <property type="entry name" value="G_TR_1"/>
    <property type="match status" value="1"/>
</dbReference>
<dbReference type="PROSITE" id="PS51722">
    <property type="entry name" value="G_TR_2"/>
    <property type="match status" value="1"/>
</dbReference>
<accession>A4FPM8</accession>
<proteinExistence type="inferred from homology"/>
<protein>
    <recommendedName>
        <fullName evidence="1">Elongation factor G</fullName>
        <shortName evidence="1">EF-G</shortName>
    </recommendedName>
</protein>
<reference key="1">
    <citation type="journal article" date="2007" name="Nat. Biotechnol.">
        <title>Complete genome sequence of the erythromycin-producing bacterium Saccharopolyspora erythraea NRRL23338.</title>
        <authorList>
            <person name="Oliynyk M."/>
            <person name="Samborskyy M."/>
            <person name="Lester J.B."/>
            <person name="Mironenko T."/>
            <person name="Scott N."/>
            <person name="Dickens S."/>
            <person name="Haydock S.F."/>
            <person name="Leadlay P.F."/>
        </authorList>
    </citation>
    <scope>NUCLEOTIDE SEQUENCE [LARGE SCALE GENOMIC DNA]</scope>
    <source>
        <strain>ATCC 11635 / DSM 40517 / JCM 4748 / NBRC 13426 / NCIMB 8594 / NRRL 2338</strain>
    </source>
</reference>
<comment type="function">
    <text evidence="1">Catalyzes the GTP-dependent ribosomal translocation step during translation elongation. During this step, the ribosome changes from the pre-translocational (PRE) to the post-translocational (POST) state as the newly formed A-site-bound peptidyl-tRNA and P-site-bound deacylated tRNA move to the P and E sites, respectively. Catalyzes the coordinated movement of the two tRNA molecules, the mRNA and conformational changes in the ribosome.</text>
</comment>
<comment type="subcellular location">
    <subcellularLocation>
        <location evidence="1">Cytoplasm</location>
    </subcellularLocation>
</comment>
<comment type="similarity">
    <text evidence="1">Belongs to the TRAFAC class translation factor GTPase superfamily. Classic translation factor GTPase family. EF-G/EF-2 subfamily.</text>
</comment>
<sequence>MARDVLTDLTKVRNIGIMAHIDAGKTTTTERILYYTGITYKIGEVHDGAATMDWMEEEQKRGITITSAATTTFWGDNQINIIDTPGHVDFTVEVERSLRVLDGAVAVFDGKEGVEPQSEQVWRQADKYEVPRICFVNKMDKLGADFYYTVRTIEERLAAKPLVLQLPIGSESDFQGVVDLVRMKALTWRGEVKKGEDYAVEDIPAELADEAAKYREQLVEAVAETDEALMEAYFGGEELTEEQIKNGIRKLTINREAFPVLCGTAFKNKGVQPMLDAVVDYLPSPLDVPPVQGLLPDGETAAERKPSTQEPFAALVSKISVHPFFGKLTYVRVYSGKVSSGTQVINSTKERKERIGKMFQMHSNKENPVDEIQAGHIYAVIGLKDTTTGDTLCDPQNPIVLESMTFPAPVIEVAIEPKTKADQEKLSTAIQKLAEEDPTFQVKLDDETGQTIIKGMGELHLEVLVNRMKSDFKVEANIGKPQVAYRETIRKTVEKYEYTHKKQTGGSGQFARVIISLEPIEQSADSATYEFENKVTGGRVPREYIPSVDQGAQDAMQYGVLAGYPLVGIKVTLLDGQYHEVDSSEMAFKIAGSIAMKEAAAKASPALLEPIMAVEVTTPEDYMGDVIGDLNSRRGHIQAMEERSGVRVVKAQVPLSEMFGYVGDLRSKTQGRANYSMVFDSYAEVPANVAKEIIAKATGE</sequence>
<name>EFG_SACEN</name>
<feature type="chain" id="PRO_1000008880" description="Elongation factor G">
    <location>
        <begin position="1"/>
        <end position="700"/>
    </location>
</feature>
<feature type="domain" description="tr-type G">
    <location>
        <begin position="10"/>
        <end position="286"/>
    </location>
</feature>
<feature type="binding site" evidence="1">
    <location>
        <begin position="19"/>
        <end position="26"/>
    </location>
    <ligand>
        <name>GTP</name>
        <dbReference type="ChEBI" id="CHEBI:37565"/>
    </ligand>
</feature>
<feature type="binding site" evidence="1">
    <location>
        <begin position="83"/>
        <end position="87"/>
    </location>
    <ligand>
        <name>GTP</name>
        <dbReference type="ChEBI" id="CHEBI:37565"/>
    </ligand>
</feature>
<feature type="binding site" evidence="1">
    <location>
        <begin position="137"/>
        <end position="140"/>
    </location>
    <ligand>
        <name>GTP</name>
        <dbReference type="ChEBI" id="CHEBI:37565"/>
    </ligand>
</feature>
<evidence type="ECO:0000255" key="1">
    <source>
        <dbReference type="HAMAP-Rule" id="MF_00054"/>
    </source>
</evidence>
<organism>
    <name type="scientific">Saccharopolyspora erythraea (strain ATCC 11635 / DSM 40517 / JCM 4748 / NBRC 13426 / NCIMB 8594 / NRRL 2338)</name>
    <dbReference type="NCBI Taxonomy" id="405948"/>
    <lineage>
        <taxon>Bacteria</taxon>
        <taxon>Bacillati</taxon>
        <taxon>Actinomycetota</taxon>
        <taxon>Actinomycetes</taxon>
        <taxon>Pseudonocardiales</taxon>
        <taxon>Pseudonocardiaceae</taxon>
        <taxon>Saccharopolyspora</taxon>
    </lineage>
</organism>
<keyword id="KW-0963">Cytoplasm</keyword>
<keyword id="KW-0251">Elongation factor</keyword>
<keyword id="KW-0342">GTP-binding</keyword>
<keyword id="KW-0547">Nucleotide-binding</keyword>
<keyword id="KW-0648">Protein biosynthesis</keyword>
<keyword id="KW-1185">Reference proteome</keyword>
<gene>
    <name evidence="1" type="primary">fusA</name>
    <name type="ordered locus">SACE_6839</name>
</gene>